<keyword id="KW-0007">Acetylation</keyword>
<keyword id="KW-0067">ATP-binding</keyword>
<keyword id="KW-0963">Cytoplasm</keyword>
<keyword id="KW-0256">Endoplasmic reticulum</keyword>
<keyword id="KW-0418">Kinase</keyword>
<keyword id="KW-0443">Lipid metabolism</keyword>
<keyword id="KW-0547">Nucleotide-binding</keyword>
<keyword id="KW-0597">Phosphoprotein</keyword>
<keyword id="KW-1185">Reference proteome</keyword>
<keyword id="KW-0808">Transferase</keyword>
<accession>Q91XU3</accession>
<accession>Q3UFU5</accession>
<accession>Q99K02</accession>
<feature type="initiator methionine" description="Removed" evidence="2">
    <location>
        <position position="1"/>
    </location>
</feature>
<feature type="chain" id="PRO_0000285751" description="Phosphatidylinositol 5-phosphate 4-kinase type-2 gamma">
    <location>
        <begin position="2"/>
        <end position="421"/>
    </location>
</feature>
<feature type="domain" description="PIPK" evidence="3">
    <location>
        <begin position="43"/>
        <end position="420"/>
    </location>
</feature>
<feature type="region of interest" description="Required for interaction with PIP5K1A" evidence="2">
    <location>
        <begin position="69"/>
        <end position="75"/>
    </location>
</feature>
<feature type="modified residue" description="N-acetylalanine" evidence="2">
    <location>
        <position position="2"/>
    </location>
</feature>
<feature type="modified residue" description="Phosphoserine" evidence="2">
    <location>
        <position position="26"/>
    </location>
</feature>
<feature type="modified residue" description="Phosphoserine" evidence="2">
    <location>
        <position position="349"/>
    </location>
</feature>
<feature type="sequence conflict" description="In Ref. 2; BAE28464." evidence="5" ref="2">
    <original>H</original>
    <variation>R</variation>
    <location>
        <position position="90"/>
    </location>
</feature>
<sequence length="421" mass="47336">MASSSVPPATAPAAAGGPGPGFGFASKTKKKHFVQQKVKVFRAADPLVGVFLWGVAHSINELSQVPPPVMLLPDDFKASSKIKVNNHFFHRENLPSHFKFKEYCPQVFRNLRDRFAIDDHDYLVSLTRSPPSETEGSDGRFLISYDRTLVIKEVSSEDIADMHSNLSNYHQYIVKCHGNTLLPQFLGMYRVSVENEDSYMLVMRNMFSHRLPVHRKYDLKGSLVSREASDKEKVKELPTLKDMDFLNKNQKVYIGEEEKKVFLEKLKRDVEFLVQLKIMDYSLLLGIHDIIRGSEPEEEGPVREEESEWDGDCNLAGPPALVGSYGTSPEGIGGYIHSHRPLGPGEFESFIDVYAIRSAEGAPQKEVYFMGLIDILTQYDAKKKAAHAAKTVKHGAGAEISTVHPEQYAKRFLDFIANIFA</sequence>
<protein>
    <recommendedName>
        <fullName>Phosphatidylinositol 5-phosphate 4-kinase type-2 gamma</fullName>
        <ecNumber evidence="2">2.7.1.149</ecNumber>
    </recommendedName>
    <alternativeName>
        <fullName>Phosphatidylinositol 5-phosphate 4-kinase type II gamma</fullName>
        <shortName>PI(5)P 4-kinase type II gamma</shortName>
        <shortName>PIP4KII-gamma</shortName>
    </alternativeName>
</protein>
<name>PI42C_MOUSE</name>
<organism>
    <name type="scientific">Mus musculus</name>
    <name type="common">Mouse</name>
    <dbReference type="NCBI Taxonomy" id="10090"/>
    <lineage>
        <taxon>Eukaryota</taxon>
        <taxon>Metazoa</taxon>
        <taxon>Chordata</taxon>
        <taxon>Craniata</taxon>
        <taxon>Vertebrata</taxon>
        <taxon>Euteleostomi</taxon>
        <taxon>Mammalia</taxon>
        <taxon>Eutheria</taxon>
        <taxon>Euarchontoglires</taxon>
        <taxon>Glires</taxon>
        <taxon>Rodentia</taxon>
        <taxon>Myomorpha</taxon>
        <taxon>Muroidea</taxon>
        <taxon>Muridae</taxon>
        <taxon>Murinae</taxon>
        <taxon>Mus</taxon>
        <taxon>Mus</taxon>
    </lineage>
</organism>
<proteinExistence type="evidence at protein level"/>
<evidence type="ECO:0000250" key="1">
    <source>
        <dbReference type="UniProtKB" id="O88370"/>
    </source>
</evidence>
<evidence type="ECO:0000250" key="2">
    <source>
        <dbReference type="UniProtKB" id="Q8TBX8"/>
    </source>
</evidence>
<evidence type="ECO:0000255" key="3">
    <source>
        <dbReference type="PROSITE-ProRule" id="PRU00781"/>
    </source>
</evidence>
<evidence type="ECO:0000269" key="4">
    <source>
    </source>
</evidence>
<evidence type="ECO:0000305" key="5"/>
<evidence type="ECO:0000312" key="6">
    <source>
        <dbReference type="MGI" id="MGI:2152214"/>
    </source>
</evidence>
<dbReference type="EC" id="2.7.1.149" evidence="2"/>
<dbReference type="EMBL" id="AB054591">
    <property type="protein sequence ID" value="BAB62096.1"/>
    <property type="molecule type" value="mRNA"/>
</dbReference>
<dbReference type="EMBL" id="AK148299">
    <property type="protein sequence ID" value="BAE28464.1"/>
    <property type="molecule type" value="mRNA"/>
</dbReference>
<dbReference type="EMBL" id="BC005539">
    <property type="protein sequence ID" value="AAH05539.1"/>
    <property type="molecule type" value="mRNA"/>
</dbReference>
<dbReference type="EMBL" id="BC021383">
    <property type="protein sequence ID" value="AAH21383.1"/>
    <property type="molecule type" value="mRNA"/>
</dbReference>
<dbReference type="CCDS" id="CCDS24232.1"/>
<dbReference type="RefSeq" id="NP_001346209.1">
    <property type="nucleotide sequence ID" value="NM_001359280.1"/>
</dbReference>
<dbReference type="RefSeq" id="NP_473438.1">
    <property type="nucleotide sequence ID" value="NM_054097.3"/>
</dbReference>
<dbReference type="RefSeq" id="XP_017169257.1">
    <property type="nucleotide sequence ID" value="XM_017313768.1"/>
</dbReference>
<dbReference type="SMR" id="Q91XU3"/>
<dbReference type="BioGRID" id="228173">
    <property type="interactions" value="33"/>
</dbReference>
<dbReference type="FunCoup" id="Q91XU3">
    <property type="interactions" value="3267"/>
</dbReference>
<dbReference type="IntAct" id="Q91XU3">
    <property type="interactions" value="15"/>
</dbReference>
<dbReference type="MINT" id="Q91XU3"/>
<dbReference type="STRING" id="10090.ENSMUSP00000013970"/>
<dbReference type="GlyGen" id="Q91XU3">
    <property type="glycosylation" value="1 site, 1 O-linked glycan (1 site)"/>
</dbReference>
<dbReference type="iPTMnet" id="Q91XU3"/>
<dbReference type="PhosphoSitePlus" id="Q91XU3"/>
<dbReference type="jPOST" id="Q91XU3"/>
<dbReference type="PaxDb" id="10090-ENSMUSP00000013970"/>
<dbReference type="PeptideAtlas" id="Q91XU3"/>
<dbReference type="ProteomicsDB" id="288205"/>
<dbReference type="Pumba" id="Q91XU3"/>
<dbReference type="Antibodypedia" id="28802">
    <property type="antibodies" value="116 antibodies from 25 providers"/>
</dbReference>
<dbReference type="DNASU" id="117150"/>
<dbReference type="Ensembl" id="ENSMUST00000013970.9">
    <property type="protein sequence ID" value="ENSMUSP00000013970.8"/>
    <property type="gene ID" value="ENSMUSG00000025417.9"/>
</dbReference>
<dbReference type="GeneID" id="117150"/>
<dbReference type="KEGG" id="mmu:117150"/>
<dbReference type="UCSC" id="uc007hiq.2">
    <property type="organism name" value="mouse"/>
</dbReference>
<dbReference type="AGR" id="MGI:2152214"/>
<dbReference type="CTD" id="79837"/>
<dbReference type="MGI" id="MGI:2152214">
    <property type="gene designation" value="Pip4k2c"/>
</dbReference>
<dbReference type="VEuPathDB" id="HostDB:ENSMUSG00000025417"/>
<dbReference type="eggNOG" id="KOG0229">
    <property type="taxonomic scope" value="Eukaryota"/>
</dbReference>
<dbReference type="GeneTree" id="ENSGT00940000156890"/>
<dbReference type="HOGENOM" id="CLU_004312_7_0_1"/>
<dbReference type="InParanoid" id="Q91XU3"/>
<dbReference type="OMA" id="HEKWDIK"/>
<dbReference type="OrthoDB" id="20783at2759"/>
<dbReference type="PhylomeDB" id="Q91XU3"/>
<dbReference type="TreeFam" id="TF354315"/>
<dbReference type="BRENDA" id="2.7.1.149">
    <property type="organism ID" value="3474"/>
</dbReference>
<dbReference type="Reactome" id="R-MMU-1660499">
    <property type="pathway name" value="Synthesis of PIPs at the plasma membrane"/>
</dbReference>
<dbReference type="Reactome" id="R-MMU-6811555">
    <property type="pathway name" value="PI5P Regulates TP53 Acetylation"/>
</dbReference>
<dbReference type="Reactome" id="R-MMU-6811558">
    <property type="pathway name" value="PI5P, PP2A and IER3 Regulate PI3K/AKT Signaling"/>
</dbReference>
<dbReference type="Reactome" id="R-MMU-8847453">
    <property type="pathway name" value="Synthesis of PIPs in the nucleus"/>
</dbReference>
<dbReference type="BioGRID-ORCS" id="117150">
    <property type="hits" value="2 hits in 79 CRISPR screens"/>
</dbReference>
<dbReference type="ChiTaRS" id="Pip4k2c">
    <property type="organism name" value="mouse"/>
</dbReference>
<dbReference type="PRO" id="PR:Q91XU3"/>
<dbReference type="Proteomes" id="UP000000589">
    <property type="component" value="Chromosome 10"/>
</dbReference>
<dbReference type="RNAct" id="Q91XU3">
    <property type="molecule type" value="protein"/>
</dbReference>
<dbReference type="Bgee" id="ENSMUSG00000025417">
    <property type="expression patterns" value="Expressed in pigmented layer of retina and 278 other cell types or tissues"/>
</dbReference>
<dbReference type="GO" id="GO:0005776">
    <property type="term" value="C:autophagosome"/>
    <property type="evidence" value="ECO:0007669"/>
    <property type="project" value="Ensembl"/>
</dbReference>
<dbReference type="GO" id="GO:0005829">
    <property type="term" value="C:cytosol"/>
    <property type="evidence" value="ECO:0007669"/>
    <property type="project" value="Ensembl"/>
</dbReference>
<dbReference type="GO" id="GO:0005783">
    <property type="term" value="C:endoplasmic reticulum"/>
    <property type="evidence" value="ECO:0007669"/>
    <property type="project" value="UniProtKB-SubCell"/>
</dbReference>
<dbReference type="GO" id="GO:0005654">
    <property type="term" value="C:nucleoplasm"/>
    <property type="evidence" value="ECO:0007669"/>
    <property type="project" value="Ensembl"/>
</dbReference>
<dbReference type="GO" id="GO:0005886">
    <property type="term" value="C:plasma membrane"/>
    <property type="evidence" value="ECO:0007669"/>
    <property type="project" value="Ensembl"/>
</dbReference>
<dbReference type="GO" id="GO:0016308">
    <property type="term" value="F:1-phosphatidylinositol-4-phosphate 5-kinase activity"/>
    <property type="evidence" value="ECO:0000250"/>
    <property type="project" value="UniProtKB"/>
</dbReference>
<dbReference type="GO" id="GO:0016309">
    <property type="term" value="F:1-phosphatidylinositol-5-phosphate 4-kinase activity"/>
    <property type="evidence" value="ECO:0007669"/>
    <property type="project" value="UniProtKB-EC"/>
</dbReference>
<dbReference type="GO" id="GO:0005524">
    <property type="term" value="F:ATP binding"/>
    <property type="evidence" value="ECO:0007669"/>
    <property type="project" value="UniProtKB-KW"/>
</dbReference>
<dbReference type="GO" id="GO:0042802">
    <property type="term" value="F:identical protein binding"/>
    <property type="evidence" value="ECO:0007669"/>
    <property type="project" value="Ensembl"/>
</dbReference>
<dbReference type="GO" id="GO:1902635">
    <property type="term" value="P:1-phosphatidyl-1D-myo-inositol 4,5-bisphosphate biosynthetic process"/>
    <property type="evidence" value="ECO:0000250"/>
    <property type="project" value="UniProtKB"/>
</dbReference>
<dbReference type="GO" id="GO:0046627">
    <property type="term" value="P:negative regulation of insulin receptor signaling pathway"/>
    <property type="evidence" value="ECO:0000250"/>
    <property type="project" value="UniProtKB"/>
</dbReference>
<dbReference type="GO" id="GO:2000786">
    <property type="term" value="P:positive regulation of autophagosome assembly"/>
    <property type="evidence" value="ECO:0007669"/>
    <property type="project" value="Ensembl"/>
</dbReference>
<dbReference type="CDD" id="cd17311">
    <property type="entry name" value="PIPKc_PIP5K2C"/>
    <property type="match status" value="1"/>
</dbReference>
<dbReference type="FunFam" id="3.30.800.10:FF:000002">
    <property type="entry name" value="Phosphatidylinositol 5-phosphate 4-kinase type-2 beta"/>
    <property type="match status" value="1"/>
</dbReference>
<dbReference type="FunFam" id="3.30.810.10:FF:000003">
    <property type="entry name" value="Phosphatidylinositol 5-phosphate 4-kinase type-2 beta"/>
    <property type="match status" value="1"/>
</dbReference>
<dbReference type="FunFam" id="3.30.810.10:FF:000004">
    <property type="entry name" value="Phosphatidylinositol 5-phosphate 4-kinase type-2 beta"/>
    <property type="match status" value="1"/>
</dbReference>
<dbReference type="Gene3D" id="3.30.810.10">
    <property type="entry name" value="2-Layer Sandwich"/>
    <property type="match status" value="2"/>
</dbReference>
<dbReference type="Gene3D" id="3.30.800.10">
    <property type="entry name" value="Phosphatidylinositol Phosphate Kinase II Beta"/>
    <property type="match status" value="1"/>
</dbReference>
<dbReference type="InterPro" id="IPR027483">
    <property type="entry name" value="PInositol-4-P-4/5-kinase_C_sf"/>
</dbReference>
<dbReference type="InterPro" id="IPR002498">
    <property type="entry name" value="PInositol-4-P-4/5-kinase_core"/>
</dbReference>
<dbReference type="InterPro" id="IPR027484">
    <property type="entry name" value="PInositol-4-P-5-kinase_N"/>
</dbReference>
<dbReference type="InterPro" id="IPR023610">
    <property type="entry name" value="PInositol-4/5-P-5/4-kinase"/>
</dbReference>
<dbReference type="PANTHER" id="PTHR23086:SF35">
    <property type="entry name" value="PHOSPHATIDYLINOSITOL 5-PHOSPHATE 4-KINASE TYPE-2 GAMMA"/>
    <property type="match status" value="1"/>
</dbReference>
<dbReference type="PANTHER" id="PTHR23086">
    <property type="entry name" value="PHOSPHATIDYLINOSITOL-4-PHOSPHATE 5-KINASE"/>
    <property type="match status" value="1"/>
</dbReference>
<dbReference type="Pfam" id="PF01504">
    <property type="entry name" value="PIP5K"/>
    <property type="match status" value="1"/>
</dbReference>
<dbReference type="SMART" id="SM00330">
    <property type="entry name" value="PIPKc"/>
    <property type="match status" value="1"/>
</dbReference>
<dbReference type="SUPFAM" id="SSF56104">
    <property type="entry name" value="SAICAR synthase-like"/>
    <property type="match status" value="1"/>
</dbReference>
<dbReference type="PROSITE" id="PS51455">
    <property type="entry name" value="PIPK"/>
    <property type="match status" value="1"/>
</dbReference>
<gene>
    <name evidence="6" type="primary">Pip4k2c</name>
    <name type="synonym">Pip5k2c</name>
</gene>
<comment type="function">
    <text evidence="2">Phosphatidylinositol 5-phosphate 4-kinase with low enzymatic activity. May be a GTP sensor, has higher GTP-dependent kinase activity than ATP-dependent kinase activity. PIP4Ks negatively regulate insulin signaling through a catalytic-independent mechanism. They interact with PIP5Ks and suppress PIP5K-mediated PtdIns(4,5)P2 synthesis and insulin-dependent conversion to PtdIns(3,4,5)P3.</text>
</comment>
<comment type="catalytic activity">
    <reaction evidence="2">
        <text>a 1,2-diacyl-sn-glycero-3-phospho-(1D-myo-inositol-5-phosphate) + ATP = a 1,2-diacyl-sn-glycero-3-phospho-(1D-myo-inositol-4,5-bisphosphate) + ADP + H(+)</text>
        <dbReference type="Rhea" id="RHEA:12280"/>
        <dbReference type="ChEBI" id="CHEBI:15378"/>
        <dbReference type="ChEBI" id="CHEBI:30616"/>
        <dbReference type="ChEBI" id="CHEBI:57795"/>
        <dbReference type="ChEBI" id="CHEBI:58456"/>
        <dbReference type="ChEBI" id="CHEBI:456216"/>
        <dbReference type="EC" id="2.7.1.149"/>
    </reaction>
    <physiologicalReaction direction="left-to-right" evidence="2">
        <dbReference type="Rhea" id="RHEA:12281"/>
    </physiologicalReaction>
</comment>
<comment type="catalytic activity">
    <reaction evidence="2">
        <text>1,2-dihexadecanoyl-sn-glycero-3-phospho-(1D-myo-inositol-5-phosphate) + ATP = 1,2-dihexadecanoyl-sn-glycero-3-phospho-(1D-myo-inositol-4,5-bisphosphate) + ADP + H(+)</text>
        <dbReference type="Rhea" id="RHEA:55992"/>
        <dbReference type="ChEBI" id="CHEBI:15378"/>
        <dbReference type="ChEBI" id="CHEBI:30616"/>
        <dbReference type="ChEBI" id="CHEBI:83423"/>
        <dbReference type="ChEBI" id="CHEBI:84968"/>
        <dbReference type="ChEBI" id="CHEBI:456216"/>
    </reaction>
    <physiologicalReaction direction="left-to-right" evidence="2">
        <dbReference type="Rhea" id="RHEA:55993"/>
    </physiologicalReaction>
</comment>
<comment type="catalytic activity">
    <reaction evidence="2">
        <text>1,2-dihexadecanoyl-sn-glycero-3-phospho-(1D-myo-inositol-5-phosphate) + GTP = 1,2-dihexadecanoyl-sn-glycero-3-phospho-(1D-myo-inositol-4,5-bisphosphate) + GDP + H(+)</text>
        <dbReference type="Rhea" id="RHEA:55964"/>
        <dbReference type="ChEBI" id="CHEBI:15378"/>
        <dbReference type="ChEBI" id="CHEBI:37565"/>
        <dbReference type="ChEBI" id="CHEBI:58189"/>
        <dbReference type="ChEBI" id="CHEBI:83423"/>
        <dbReference type="ChEBI" id="CHEBI:84968"/>
    </reaction>
    <physiologicalReaction direction="left-to-right" evidence="2">
        <dbReference type="Rhea" id="RHEA:55965"/>
    </physiologicalReaction>
</comment>
<comment type="subunit">
    <text evidence="2">Interacts with PIP5K1A; the interaction inhibits PIP5K1A kinase activity.</text>
</comment>
<comment type="subcellular location">
    <subcellularLocation>
        <location evidence="1">Endoplasmic reticulum</location>
    </subcellularLocation>
    <subcellularLocation>
        <location evidence="1">Cytoplasm</location>
    </subcellularLocation>
</comment>
<comment type="developmental stage">
    <text evidence="4">No significant expression was discerned throughout the prenatal brains except for the olfactory mantle zone, which exhibited the expression signals weakly. On P0 and P7, the expression was weakly positive in the gray matter throughout the brain, with higher expression in the olfactory mitral cell layer. In the cerebellum, the expression was evenly positive in external and internal granule cell layers. On P21 and P56, the expression in non-cortical brain parenchyma was negligible. However, the expression was evident in the olfactory mitral cell layer, the piriform cortex, the hippocampal pyramidal CA1-3, and the cerebellar Purkinje cell layer, although much less distinct in the dentate granule cell layer and the cerebellar granule cell layer. In the cerebral cortex, the expression was weaker in layer V than the other layers. No significant expression was seen in the white matter.</text>
</comment>
<comment type="PTM">
    <text evidence="1">Phosphorylated, phosphorylation is induced by EGF.</text>
</comment>
<reference key="1">
    <citation type="journal article" date="2002" name="Gene Expr. Patterns">
        <title>Localization of mRNAs for phosphatidylinositol phosphate kinases in the mouse brain during development.</title>
        <authorList>
            <person name="Akiba Y."/>
            <person name="Suzuki R."/>
            <person name="Saito-Saino S."/>
            <person name="Owada Y."/>
            <person name="Sakagami H."/>
            <person name="Watanabe M."/>
            <person name="Kondo H."/>
        </authorList>
    </citation>
    <scope>NUCLEOTIDE SEQUENCE [MRNA]</scope>
    <scope>DEVELOPMENTAL STAGE</scope>
    <source>
        <strain>C57BL/6J</strain>
        <tissue>Brain</tissue>
    </source>
</reference>
<reference key="2">
    <citation type="journal article" date="2005" name="Science">
        <title>The transcriptional landscape of the mammalian genome.</title>
        <authorList>
            <person name="Carninci P."/>
            <person name="Kasukawa T."/>
            <person name="Katayama S."/>
            <person name="Gough J."/>
            <person name="Frith M.C."/>
            <person name="Maeda N."/>
            <person name="Oyama R."/>
            <person name="Ravasi T."/>
            <person name="Lenhard B."/>
            <person name="Wells C."/>
            <person name="Kodzius R."/>
            <person name="Shimokawa K."/>
            <person name="Bajic V.B."/>
            <person name="Brenner S.E."/>
            <person name="Batalov S."/>
            <person name="Forrest A.R."/>
            <person name="Zavolan M."/>
            <person name="Davis M.J."/>
            <person name="Wilming L.G."/>
            <person name="Aidinis V."/>
            <person name="Allen J.E."/>
            <person name="Ambesi-Impiombato A."/>
            <person name="Apweiler R."/>
            <person name="Aturaliya R.N."/>
            <person name="Bailey T.L."/>
            <person name="Bansal M."/>
            <person name="Baxter L."/>
            <person name="Beisel K.W."/>
            <person name="Bersano T."/>
            <person name="Bono H."/>
            <person name="Chalk A.M."/>
            <person name="Chiu K.P."/>
            <person name="Choudhary V."/>
            <person name="Christoffels A."/>
            <person name="Clutterbuck D.R."/>
            <person name="Crowe M.L."/>
            <person name="Dalla E."/>
            <person name="Dalrymple B.P."/>
            <person name="de Bono B."/>
            <person name="Della Gatta G."/>
            <person name="di Bernardo D."/>
            <person name="Down T."/>
            <person name="Engstrom P."/>
            <person name="Fagiolini M."/>
            <person name="Faulkner G."/>
            <person name="Fletcher C.F."/>
            <person name="Fukushima T."/>
            <person name="Furuno M."/>
            <person name="Futaki S."/>
            <person name="Gariboldi M."/>
            <person name="Georgii-Hemming P."/>
            <person name="Gingeras T.R."/>
            <person name="Gojobori T."/>
            <person name="Green R.E."/>
            <person name="Gustincich S."/>
            <person name="Harbers M."/>
            <person name="Hayashi Y."/>
            <person name="Hensch T.K."/>
            <person name="Hirokawa N."/>
            <person name="Hill D."/>
            <person name="Huminiecki L."/>
            <person name="Iacono M."/>
            <person name="Ikeo K."/>
            <person name="Iwama A."/>
            <person name="Ishikawa T."/>
            <person name="Jakt M."/>
            <person name="Kanapin A."/>
            <person name="Katoh M."/>
            <person name="Kawasawa Y."/>
            <person name="Kelso J."/>
            <person name="Kitamura H."/>
            <person name="Kitano H."/>
            <person name="Kollias G."/>
            <person name="Krishnan S.P."/>
            <person name="Kruger A."/>
            <person name="Kummerfeld S.K."/>
            <person name="Kurochkin I.V."/>
            <person name="Lareau L.F."/>
            <person name="Lazarevic D."/>
            <person name="Lipovich L."/>
            <person name="Liu J."/>
            <person name="Liuni S."/>
            <person name="McWilliam S."/>
            <person name="Madan Babu M."/>
            <person name="Madera M."/>
            <person name="Marchionni L."/>
            <person name="Matsuda H."/>
            <person name="Matsuzawa S."/>
            <person name="Miki H."/>
            <person name="Mignone F."/>
            <person name="Miyake S."/>
            <person name="Morris K."/>
            <person name="Mottagui-Tabar S."/>
            <person name="Mulder N."/>
            <person name="Nakano N."/>
            <person name="Nakauchi H."/>
            <person name="Ng P."/>
            <person name="Nilsson R."/>
            <person name="Nishiguchi S."/>
            <person name="Nishikawa S."/>
            <person name="Nori F."/>
            <person name="Ohara O."/>
            <person name="Okazaki Y."/>
            <person name="Orlando V."/>
            <person name="Pang K.C."/>
            <person name="Pavan W.J."/>
            <person name="Pavesi G."/>
            <person name="Pesole G."/>
            <person name="Petrovsky N."/>
            <person name="Piazza S."/>
            <person name="Reed J."/>
            <person name="Reid J.F."/>
            <person name="Ring B.Z."/>
            <person name="Ringwald M."/>
            <person name="Rost B."/>
            <person name="Ruan Y."/>
            <person name="Salzberg S.L."/>
            <person name="Sandelin A."/>
            <person name="Schneider C."/>
            <person name="Schoenbach C."/>
            <person name="Sekiguchi K."/>
            <person name="Semple C.A."/>
            <person name="Seno S."/>
            <person name="Sessa L."/>
            <person name="Sheng Y."/>
            <person name="Shibata Y."/>
            <person name="Shimada H."/>
            <person name="Shimada K."/>
            <person name="Silva D."/>
            <person name="Sinclair B."/>
            <person name="Sperling S."/>
            <person name="Stupka E."/>
            <person name="Sugiura K."/>
            <person name="Sultana R."/>
            <person name="Takenaka Y."/>
            <person name="Taki K."/>
            <person name="Tammoja K."/>
            <person name="Tan S.L."/>
            <person name="Tang S."/>
            <person name="Taylor M.S."/>
            <person name="Tegner J."/>
            <person name="Teichmann S.A."/>
            <person name="Ueda H.R."/>
            <person name="van Nimwegen E."/>
            <person name="Verardo R."/>
            <person name="Wei C.L."/>
            <person name="Yagi K."/>
            <person name="Yamanishi H."/>
            <person name="Zabarovsky E."/>
            <person name="Zhu S."/>
            <person name="Zimmer A."/>
            <person name="Hide W."/>
            <person name="Bult C."/>
            <person name="Grimmond S.M."/>
            <person name="Teasdale R.D."/>
            <person name="Liu E.T."/>
            <person name="Brusic V."/>
            <person name="Quackenbush J."/>
            <person name="Wahlestedt C."/>
            <person name="Mattick J.S."/>
            <person name="Hume D.A."/>
            <person name="Kai C."/>
            <person name="Sasaki D."/>
            <person name="Tomaru Y."/>
            <person name="Fukuda S."/>
            <person name="Kanamori-Katayama M."/>
            <person name="Suzuki M."/>
            <person name="Aoki J."/>
            <person name="Arakawa T."/>
            <person name="Iida J."/>
            <person name="Imamura K."/>
            <person name="Itoh M."/>
            <person name="Kato T."/>
            <person name="Kawaji H."/>
            <person name="Kawagashira N."/>
            <person name="Kawashima T."/>
            <person name="Kojima M."/>
            <person name="Kondo S."/>
            <person name="Konno H."/>
            <person name="Nakano K."/>
            <person name="Ninomiya N."/>
            <person name="Nishio T."/>
            <person name="Okada M."/>
            <person name="Plessy C."/>
            <person name="Shibata K."/>
            <person name="Shiraki T."/>
            <person name="Suzuki S."/>
            <person name="Tagami M."/>
            <person name="Waki K."/>
            <person name="Watahiki A."/>
            <person name="Okamura-Oho Y."/>
            <person name="Suzuki H."/>
            <person name="Kawai J."/>
            <person name="Hayashizaki Y."/>
        </authorList>
    </citation>
    <scope>NUCLEOTIDE SEQUENCE [LARGE SCALE MRNA]</scope>
    <source>
        <strain>C57BL/6J</strain>
    </source>
</reference>
<reference key="3">
    <citation type="journal article" date="2004" name="Genome Res.">
        <title>The status, quality, and expansion of the NIH full-length cDNA project: the Mammalian Gene Collection (MGC).</title>
        <authorList>
            <consortium name="The MGC Project Team"/>
        </authorList>
    </citation>
    <scope>NUCLEOTIDE SEQUENCE [LARGE SCALE MRNA]</scope>
    <source>
        <strain>Czech II</strain>
        <strain>FVB/N</strain>
        <tissue>Kidney</tissue>
        <tissue>Mammary tumor</tissue>
    </source>
</reference>
<reference key="4">
    <citation type="journal article" date="2010" name="Cell">
        <title>A tissue-specific atlas of mouse protein phosphorylation and expression.</title>
        <authorList>
            <person name="Huttlin E.L."/>
            <person name="Jedrychowski M.P."/>
            <person name="Elias J.E."/>
            <person name="Goswami T."/>
            <person name="Rad R."/>
            <person name="Beausoleil S.A."/>
            <person name="Villen J."/>
            <person name="Haas W."/>
            <person name="Sowa M.E."/>
            <person name="Gygi S.P."/>
        </authorList>
    </citation>
    <scope>IDENTIFICATION BY MASS SPECTROMETRY [LARGE SCALE ANALYSIS]</scope>
    <source>
        <tissue>Brain</tissue>
        <tissue>Kidney</tissue>
        <tissue>Lung</tissue>
        <tissue>Spleen</tissue>
        <tissue>Testis</tissue>
    </source>
</reference>